<evidence type="ECO:0000255" key="1">
    <source>
        <dbReference type="HAMAP-Rule" id="MF_01396"/>
    </source>
</evidence>
<protein>
    <recommendedName>
        <fullName evidence="1">ATP synthase subunit c</fullName>
    </recommendedName>
    <alternativeName>
        <fullName evidence="1">ATP synthase F(0) sector subunit c</fullName>
    </alternativeName>
    <alternativeName>
        <fullName evidence="1">F-type ATPase subunit c</fullName>
        <shortName evidence="1">F-ATPase subunit c</shortName>
    </alternativeName>
    <alternativeName>
        <fullName evidence="1">Lipid-binding protein</fullName>
    </alternativeName>
</protein>
<keyword id="KW-0066">ATP synthesis</keyword>
<keyword id="KW-1003">Cell membrane</keyword>
<keyword id="KW-0138">CF(0)</keyword>
<keyword id="KW-0375">Hydrogen ion transport</keyword>
<keyword id="KW-0406">Ion transport</keyword>
<keyword id="KW-0446">Lipid-binding</keyword>
<keyword id="KW-0472">Membrane</keyword>
<keyword id="KW-1185">Reference proteome</keyword>
<keyword id="KW-0812">Transmembrane</keyword>
<keyword id="KW-1133">Transmembrane helix</keyword>
<keyword id="KW-0813">Transport</keyword>
<sequence>MNLTFLGLCIACMGVSVGEGLLMNGLFKSVARQPDMLSEFRSLMFLGVAFIEGTFFVTLVFSFIIK</sequence>
<gene>
    <name evidence="1" type="primary">atpE</name>
    <name type="synonym">atpC</name>
    <name type="ordered locus">SP_1514</name>
</gene>
<name>ATPL_STRPN</name>
<accession>P0A306</accession>
<accession>Q59953</accession>
<feature type="chain" id="PRO_0000112169" description="ATP synthase subunit c">
    <location>
        <begin position="1"/>
        <end position="66"/>
    </location>
</feature>
<feature type="transmembrane region" description="Helical" evidence="1">
    <location>
        <begin position="3"/>
        <end position="23"/>
    </location>
</feature>
<feature type="transmembrane region" description="Helical" evidence="1">
    <location>
        <begin position="45"/>
        <end position="65"/>
    </location>
</feature>
<feature type="site" description="Reversibly protonated during proton transport" evidence="1">
    <location>
        <position position="52"/>
    </location>
</feature>
<comment type="function">
    <text evidence="1">F(1)F(0) ATP synthase produces ATP from ADP in the presence of a proton or sodium gradient. F-type ATPases consist of two structural domains, F(1) containing the extramembraneous catalytic core and F(0) containing the membrane proton channel, linked together by a central stalk and a peripheral stalk. During catalysis, ATP synthesis in the catalytic domain of F(1) is coupled via a rotary mechanism of the central stalk subunits to proton translocation.</text>
</comment>
<comment type="function">
    <text evidence="1">Key component of the F(0) channel; it plays a direct role in translocation across the membrane. A homomeric c-ring of between 10-14 subunits forms the central stalk rotor element with the F(1) delta and epsilon subunits.</text>
</comment>
<comment type="subunit">
    <text evidence="1">F-type ATPases have 2 components, F(1) - the catalytic core - and F(0) - the membrane proton channel. F(1) has five subunits: alpha(3), beta(3), gamma(1), delta(1), epsilon(1). F(0) has three main subunits: a(1), b(2) and c(10-14). The alpha and beta chains form an alternating ring which encloses part of the gamma chain. F(1) is attached to F(0) by a central stalk formed by the gamma and epsilon chains, while a peripheral stalk is formed by the delta and b chains.</text>
</comment>
<comment type="subcellular location">
    <subcellularLocation>
        <location evidence="1">Cell membrane</location>
        <topology evidence="1">Multi-pass membrane protein</topology>
    </subcellularLocation>
</comment>
<comment type="similarity">
    <text evidence="1">Belongs to the ATPase C chain family.</text>
</comment>
<proteinExistence type="inferred from homology"/>
<dbReference type="EMBL" id="AE005672">
    <property type="protein sequence ID" value="AAK75605.1"/>
    <property type="molecule type" value="Genomic_DNA"/>
</dbReference>
<dbReference type="PIR" id="D95176">
    <property type="entry name" value="D95176"/>
</dbReference>
<dbReference type="RefSeq" id="WP_001054562.1">
    <property type="nucleotide sequence ID" value="NZ_CP155539.1"/>
</dbReference>
<dbReference type="SMR" id="P0A306"/>
<dbReference type="PaxDb" id="170187-SP_1514"/>
<dbReference type="DNASU" id="931326"/>
<dbReference type="EnsemblBacteria" id="AAK75605">
    <property type="protein sequence ID" value="AAK75605"/>
    <property type="gene ID" value="SP_1514"/>
</dbReference>
<dbReference type="KEGG" id="spn:SP_1514"/>
<dbReference type="eggNOG" id="ENOG502ZI0B">
    <property type="taxonomic scope" value="Bacteria"/>
</dbReference>
<dbReference type="PhylomeDB" id="P0A306"/>
<dbReference type="BioCyc" id="SPNE170187:G1FZB-1530-MONOMER"/>
<dbReference type="Proteomes" id="UP000000585">
    <property type="component" value="Chromosome"/>
</dbReference>
<dbReference type="GO" id="GO:0005886">
    <property type="term" value="C:plasma membrane"/>
    <property type="evidence" value="ECO:0007669"/>
    <property type="project" value="UniProtKB-SubCell"/>
</dbReference>
<dbReference type="GO" id="GO:0045259">
    <property type="term" value="C:proton-transporting ATP synthase complex"/>
    <property type="evidence" value="ECO:0007669"/>
    <property type="project" value="UniProtKB-KW"/>
</dbReference>
<dbReference type="GO" id="GO:0033177">
    <property type="term" value="C:proton-transporting two-sector ATPase complex, proton-transporting domain"/>
    <property type="evidence" value="ECO:0007669"/>
    <property type="project" value="InterPro"/>
</dbReference>
<dbReference type="GO" id="GO:0008289">
    <property type="term" value="F:lipid binding"/>
    <property type="evidence" value="ECO:0007669"/>
    <property type="project" value="UniProtKB-KW"/>
</dbReference>
<dbReference type="GO" id="GO:0046933">
    <property type="term" value="F:proton-transporting ATP synthase activity, rotational mechanism"/>
    <property type="evidence" value="ECO:0007669"/>
    <property type="project" value="UniProtKB-UniRule"/>
</dbReference>
<dbReference type="CDD" id="cd18121">
    <property type="entry name" value="ATP-synt_Fo_c"/>
    <property type="match status" value="1"/>
</dbReference>
<dbReference type="FunFam" id="1.20.20.10:FF:000017">
    <property type="entry name" value="ATP synthase subunit c"/>
    <property type="match status" value="1"/>
</dbReference>
<dbReference type="Gene3D" id="1.20.20.10">
    <property type="entry name" value="F1F0 ATP synthase subunit C"/>
    <property type="match status" value="1"/>
</dbReference>
<dbReference type="HAMAP" id="MF_01396">
    <property type="entry name" value="ATP_synth_c_bact"/>
    <property type="match status" value="1"/>
</dbReference>
<dbReference type="InterPro" id="IPR000454">
    <property type="entry name" value="ATP_synth_F0_csu"/>
</dbReference>
<dbReference type="InterPro" id="IPR020537">
    <property type="entry name" value="ATP_synth_F0_csu_DDCD_BS"/>
</dbReference>
<dbReference type="InterPro" id="IPR038662">
    <property type="entry name" value="ATP_synth_F0_csu_sf"/>
</dbReference>
<dbReference type="InterPro" id="IPR002379">
    <property type="entry name" value="ATPase_proteolipid_c-like_dom"/>
</dbReference>
<dbReference type="InterPro" id="IPR035921">
    <property type="entry name" value="F/V-ATP_Csub_sf"/>
</dbReference>
<dbReference type="NCBIfam" id="NF009997">
    <property type="entry name" value="PRK13467.1"/>
    <property type="match status" value="1"/>
</dbReference>
<dbReference type="Pfam" id="PF00137">
    <property type="entry name" value="ATP-synt_C"/>
    <property type="match status" value="1"/>
</dbReference>
<dbReference type="PRINTS" id="PR00124">
    <property type="entry name" value="ATPASEC"/>
</dbReference>
<dbReference type="SUPFAM" id="SSF81333">
    <property type="entry name" value="F1F0 ATP synthase subunit C"/>
    <property type="match status" value="1"/>
</dbReference>
<dbReference type="PROSITE" id="PS00605">
    <property type="entry name" value="ATPASE_C"/>
    <property type="match status" value="1"/>
</dbReference>
<organism>
    <name type="scientific">Streptococcus pneumoniae serotype 4 (strain ATCC BAA-334 / TIGR4)</name>
    <dbReference type="NCBI Taxonomy" id="170187"/>
    <lineage>
        <taxon>Bacteria</taxon>
        <taxon>Bacillati</taxon>
        <taxon>Bacillota</taxon>
        <taxon>Bacilli</taxon>
        <taxon>Lactobacillales</taxon>
        <taxon>Streptococcaceae</taxon>
        <taxon>Streptococcus</taxon>
    </lineage>
</organism>
<reference key="1">
    <citation type="journal article" date="2001" name="Science">
        <title>Complete genome sequence of a virulent isolate of Streptococcus pneumoniae.</title>
        <authorList>
            <person name="Tettelin H."/>
            <person name="Nelson K.E."/>
            <person name="Paulsen I.T."/>
            <person name="Eisen J.A."/>
            <person name="Read T.D."/>
            <person name="Peterson S.N."/>
            <person name="Heidelberg J.F."/>
            <person name="DeBoy R.T."/>
            <person name="Haft D.H."/>
            <person name="Dodson R.J."/>
            <person name="Durkin A.S."/>
            <person name="Gwinn M.L."/>
            <person name="Kolonay J.F."/>
            <person name="Nelson W.C."/>
            <person name="Peterson J.D."/>
            <person name="Umayam L.A."/>
            <person name="White O."/>
            <person name="Salzberg S.L."/>
            <person name="Lewis M.R."/>
            <person name="Radune D."/>
            <person name="Holtzapple E.K."/>
            <person name="Khouri H.M."/>
            <person name="Wolf A.M."/>
            <person name="Utterback T.R."/>
            <person name="Hansen C.L."/>
            <person name="McDonald L.A."/>
            <person name="Feldblyum T.V."/>
            <person name="Angiuoli S.V."/>
            <person name="Dickinson T."/>
            <person name="Hickey E.K."/>
            <person name="Holt I.E."/>
            <person name="Loftus B.J."/>
            <person name="Yang F."/>
            <person name="Smith H.O."/>
            <person name="Venter J.C."/>
            <person name="Dougherty B.A."/>
            <person name="Morrison D.A."/>
            <person name="Hollingshead S.K."/>
            <person name="Fraser C.M."/>
        </authorList>
    </citation>
    <scope>NUCLEOTIDE SEQUENCE [LARGE SCALE GENOMIC DNA]</scope>
    <source>
        <strain>ATCC BAA-334 / TIGR4</strain>
    </source>
</reference>